<gene>
    <name evidence="1" type="primary">gatC</name>
    <name type="ordered locus">MCCL_1638</name>
</gene>
<dbReference type="EC" id="6.3.5.-" evidence="1"/>
<dbReference type="EMBL" id="AP009484">
    <property type="protein sequence ID" value="BAH18345.1"/>
    <property type="molecule type" value="Genomic_DNA"/>
</dbReference>
<dbReference type="RefSeq" id="WP_012657539.1">
    <property type="nucleotide sequence ID" value="NC_011999.1"/>
</dbReference>
<dbReference type="SMR" id="B9E827"/>
<dbReference type="STRING" id="458233.MCCL_1638"/>
<dbReference type="GeneID" id="61129945"/>
<dbReference type="KEGG" id="mcl:MCCL_1638"/>
<dbReference type="eggNOG" id="COG0721">
    <property type="taxonomic scope" value="Bacteria"/>
</dbReference>
<dbReference type="HOGENOM" id="CLU_105899_6_1_9"/>
<dbReference type="OrthoDB" id="9813938at2"/>
<dbReference type="Proteomes" id="UP000001383">
    <property type="component" value="Chromosome"/>
</dbReference>
<dbReference type="GO" id="GO:0050566">
    <property type="term" value="F:asparaginyl-tRNA synthase (glutamine-hydrolyzing) activity"/>
    <property type="evidence" value="ECO:0007669"/>
    <property type="project" value="RHEA"/>
</dbReference>
<dbReference type="GO" id="GO:0005524">
    <property type="term" value="F:ATP binding"/>
    <property type="evidence" value="ECO:0007669"/>
    <property type="project" value="UniProtKB-KW"/>
</dbReference>
<dbReference type="GO" id="GO:0050567">
    <property type="term" value="F:glutaminyl-tRNA synthase (glutamine-hydrolyzing) activity"/>
    <property type="evidence" value="ECO:0007669"/>
    <property type="project" value="UniProtKB-UniRule"/>
</dbReference>
<dbReference type="GO" id="GO:0070681">
    <property type="term" value="P:glutaminyl-tRNAGln biosynthesis via transamidation"/>
    <property type="evidence" value="ECO:0007669"/>
    <property type="project" value="TreeGrafter"/>
</dbReference>
<dbReference type="GO" id="GO:0006450">
    <property type="term" value="P:regulation of translational fidelity"/>
    <property type="evidence" value="ECO:0007669"/>
    <property type="project" value="InterPro"/>
</dbReference>
<dbReference type="GO" id="GO:0006412">
    <property type="term" value="P:translation"/>
    <property type="evidence" value="ECO:0007669"/>
    <property type="project" value="UniProtKB-UniRule"/>
</dbReference>
<dbReference type="Gene3D" id="1.10.20.60">
    <property type="entry name" value="Glu-tRNAGln amidotransferase C subunit, N-terminal domain"/>
    <property type="match status" value="1"/>
</dbReference>
<dbReference type="HAMAP" id="MF_00122">
    <property type="entry name" value="GatC"/>
    <property type="match status" value="1"/>
</dbReference>
<dbReference type="InterPro" id="IPR036113">
    <property type="entry name" value="Asp/Glu-ADT_sf_sub_c"/>
</dbReference>
<dbReference type="InterPro" id="IPR003837">
    <property type="entry name" value="GatC"/>
</dbReference>
<dbReference type="NCBIfam" id="TIGR00135">
    <property type="entry name" value="gatC"/>
    <property type="match status" value="1"/>
</dbReference>
<dbReference type="PANTHER" id="PTHR15004">
    <property type="entry name" value="GLUTAMYL-TRNA(GLN) AMIDOTRANSFERASE SUBUNIT C, MITOCHONDRIAL"/>
    <property type="match status" value="1"/>
</dbReference>
<dbReference type="PANTHER" id="PTHR15004:SF0">
    <property type="entry name" value="GLUTAMYL-TRNA(GLN) AMIDOTRANSFERASE SUBUNIT C, MITOCHONDRIAL"/>
    <property type="match status" value="1"/>
</dbReference>
<dbReference type="Pfam" id="PF02686">
    <property type="entry name" value="GatC"/>
    <property type="match status" value="1"/>
</dbReference>
<dbReference type="SUPFAM" id="SSF141000">
    <property type="entry name" value="Glu-tRNAGln amidotransferase C subunit"/>
    <property type="match status" value="1"/>
</dbReference>
<proteinExistence type="inferred from homology"/>
<name>GATC_MACCJ</name>
<accession>B9E827</accession>
<sequence length="99" mass="10986">MSKITNEQVKHVAHLARLEITEEEATKFSAQLEAILNFADQLEEVDTEGVEPTFHVLDLQNVLREDVAETSLTQEEILKNAAHTEDGQFKVPSILGGGE</sequence>
<feature type="chain" id="PRO_1000122571" description="Aspartyl/glutamyl-tRNA(Asn/Gln) amidotransferase subunit C">
    <location>
        <begin position="1"/>
        <end position="99"/>
    </location>
</feature>
<comment type="function">
    <text evidence="1">Allows the formation of correctly charged Asn-tRNA(Asn) or Gln-tRNA(Gln) through the transamidation of misacylated Asp-tRNA(Asn) or Glu-tRNA(Gln) in organisms which lack either or both of asparaginyl-tRNA or glutaminyl-tRNA synthetases. The reaction takes place in the presence of glutamine and ATP through an activated phospho-Asp-tRNA(Asn) or phospho-Glu-tRNA(Gln).</text>
</comment>
<comment type="catalytic activity">
    <reaction evidence="1">
        <text>L-glutamyl-tRNA(Gln) + L-glutamine + ATP + H2O = L-glutaminyl-tRNA(Gln) + L-glutamate + ADP + phosphate + H(+)</text>
        <dbReference type="Rhea" id="RHEA:17521"/>
        <dbReference type="Rhea" id="RHEA-COMP:9681"/>
        <dbReference type="Rhea" id="RHEA-COMP:9684"/>
        <dbReference type="ChEBI" id="CHEBI:15377"/>
        <dbReference type="ChEBI" id="CHEBI:15378"/>
        <dbReference type="ChEBI" id="CHEBI:29985"/>
        <dbReference type="ChEBI" id="CHEBI:30616"/>
        <dbReference type="ChEBI" id="CHEBI:43474"/>
        <dbReference type="ChEBI" id="CHEBI:58359"/>
        <dbReference type="ChEBI" id="CHEBI:78520"/>
        <dbReference type="ChEBI" id="CHEBI:78521"/>
        <dbReference type="ChEBI" id="CHEBI:456216"/>
    </reaction>
</comment>
<comment type="catalytic activity">
    <reaction evidence="1">
        <text>L-aspartyl-tRNA(Asn) + L-glutamine + ATP + H2O = L-asparaginyl-tRNA(Asn) + L-glutamate + ADP + phosphate + 2 H(+)</text>
        <dbReference type="Rhea" id="RHEA:14513"/>
        <dbReference type="Rhea" id="RHEA-COMP:9674"/>
        <dbReference type="Rhea" id="RHEA-COMP:9677"/>
        <dbReference type="ChEBI" id="CHEBI:15377"/>
        <dbReference type="ChEBI" id="CHEBI:15378"/>
        <dbReference type="ChEBI" id="CHEBI:29985"/>
        <dbReference type="ChEBI" id="CHEBI:30616"/>
        <dbReference type="ChEBI" id="CHEBI:43474"/>
        <dbReference type="ChEBI" id="CHEBI:58359"/>
        <dbReference type="ChEBI" id="CHEBI:78515"/>
        <dbReference type="ChEBI" id="CHEBI:78516"/>
        <dbReference type="ChEBI" id="CHEBI:456216"/>
    </reaction>
</comment>
<comment type="subunit">
    <text evidence="1">Heterotrimer of A, B and C subunits.</text>
</comment>
<comment type="similarity">
    <text evidence="1">Belongs to the GatC family.</text>
</comment>
<protein>
    <recommendedName>
        <fullName evidence="1">Aspartyl/glutamyl-tRNA(Asn/Gln) amidotransferase subunit C</fullName>
        <shortName evidence="1">Asp/Glu-ADT subunit C</shortName>
        <ecNumber evidence="1">6.3.5.-</ecNumber>
    </recommendedName>
</protein>
<organism>
    <name type="scientific">Macrococcus caseolyticus (strain JCSC5402)</name>
    <name type="common">Macrococcoides caseolyticum</name>
    <dbReference type="NCBI Taxonomy" id="458233"/>
    <lineage>
        <taxon>Bacteria</taxon>
        <taxon>Bacillati</taxon>
        <taxon>Bacillota</taxon>
        <taxon>Bacilli</taxon>
        <taxon>Bacillales</taxon>
        <taxon>Staphylococcaceae</taxon>
        <taxon>Macrococcoides</taxon>
    </lineage>
</organism>
<evidence type="ECO:0000255" key="1">
    <source>
        <dbReference type="HAMAP-Rule" id="MF_00122"/>
    </source>
</evidence>
<keyword id="KW-0067">ATP-binding</keyword>
<keyword id="KW-0436">Ligase</keyword>
<keyword id="KW-0547">Nucleotide-binding</keyword>
<keyword id="KW-0648">Protein biosynthesis</keyword>
<keyword id="KW-1185">Reference proteome</keyword>
<reference key="1">
    <citation type="journal article" date="2009" name="J. Bacteriol.">
        <title>Complete genome sequence of Macrococcus caseolyticus strain JCSCS5402, reflecting the ancestral genome of the human-pathogenic staphylococci.</title>
        <authorList>
            <person name="Baba T."/>
            <person name="Kuwahara-Arai K."/>
            <person name="Uchiyama I."/>
            <person name="Takeuchi F."/>
            <person name="Ito T."/>
            <person name="Hiramatsu K."/>
        </authorList>
    </citation>
    <scope>NUCLEOTIDE SEQUENCE [LARGE SCALE GENOMIC DNA]</scope>
    <source>
        <strain>JCSC5402</strain>
    </source>
</reference>